<keyword id="KW-0446">Lipid-binding</keyword>
<keyword id="KW-1185">Reference proteome</keyword>
<keyword id="KW-0813">Transport</keyword>
<gene>
    <name type="primary">lbp-6</name>
    <name type="ORF">W02D3.5</name>
</gene>
<evidence type="ECO:0000250" key="1"/>
<evidence type="ECO:0000305" key="2"/>
<dbReference type="EMBL" id="FO081084">
    <property type="protein sequence ID" value="CCD68988.1"/>
    <property type="molecule type" value="Genomic_DNA"/>
</dbReference>
<dbReference type="PIR" id="T15205">
    <property type="entry name" value="T15205"/>
</dbReference>
<dbReference type="RefSeq" id="NP_491926.1">
    <property type="nucleotide sequence ID" value="NM_059525.7"/>
</dbReference>
<dbReference type="SMR" id="O01812"/>
<dbReference type="BioGRID" id="37838">
    <property type="interactions" value="65"/>
</dbReference>
<dbReference type="DIP" id="DIP-27012N"/>
<dbReference type="FunCoup" id="O01812">
    <property type="interactions" value="224"/>
</dbReference>
<dbReference type="IntAct" id="O01812">
    <property type="interactions" value="2"/>
</dbReference>
<dbReference type="STRING" id="6239.W02D3.5.1"/>
<dbReference type="PaxDb" id="6239-W02D3.5"/>
<dbReference type="PeptideAtlas" id="O01812"/>
<dbReference type="EnsemblMetazoa" id="W02D3.5.1">
    <property type="protein sequence ID" value="W02D3.5.1"/>
    <property type="gene ID" value="WBGene00002258"/>
</dbReference>
<dbReference type="GeneID" id="172390"/>
<dbReference type="KEGG" id="cel:CELE_W02D3.5"/>
<dbReference type="UCSC" id="W02D3.5.3">
    <property type="organism name" value="c. elegans"/>
</dbReference>
<dbReference type="AGR" id="WB:WBGene00002258"/>
<dbReference type="CTD" id="172390"/>
<dbReference type="WormBase" id="W02D3.5">
    <property type="protein sequence ID" value="CE14426"/>
    <property type="gene ID" value="WBGene00002258"/>
    <property type="gene designation" value="lbp-6"/>
</dbReference>
<dbReference type="eggNOG" id="KOG4015">
    <property type="taxonomic scope" value="Eukaryota"/>
</dbReference>
<dbReference type="HOGENOM" id="CLU_113772_0_1_1"/>
<dbReference type="InParanoid" id="O01812"/>
<dbReference type="OMA" id="WHSNQYS"/>
<dbReference type="OrthoDB" id="354351at2759"/>
<dbReference type="PhylomeDB" id="O01812"/>
<dbReference type="Reactome" id="R-CEL-159418">
    <property type="pathway name" value="Recycling of bile acids and salts"/>
</dbReference>
<dbReference type="Reactome" id="R-CEL-163560">
    <property type="pathway name" value="Triglyceride catabolism"/>
</dbReference>
<dbReference type="Reactome" id="R-CEL-189483">
    <property type="pathway name" value="Heme degradation"/>
</dbReference>
<dbReference type="Reactome" id="R-CEL-2453902">
    <property type="pathway name" value="The canonical retinoid cycle in rods (twilight vision)"/>
</dbReference>
<dbReference type="Reactome" id="R-CEL-5362517">
    <property type="pathway name" value="Signaling by Retinoic Acid"/>
</dbReference>
<dbReference type="Reactome" id="R-CEL-5365859">
    <property type="pathway name" value="RA biosynthesis pathway"/>
</dbReference>
<dbReference type="Reactome" id="R-CEL-975634">
    <property type="pathway name" value="Retinoid metabolism and transport"/>
</dbReference>
<dbReference type="PRO" id="PR:O01812"/>
<dbReference type="Proteomes" id="UP000001940">
    <property type="component" value="Chromosome I"/>
</dbReference>
<dbReference type="Bgee" id="WBGene00002258">
    <property type="expression patterns" value="Expressed in larva and 4 other cell types or tissues"/>
</dbReference>
<dbReference type="GO" id="GO:0005829">
    <property type="term" value="C:cytosol"/>
    <property type="evidence" value="ECO:0000318"/>
    <property type="project" value="GO_Central"/>
</dbReference>
<dbReference type="GO" id="GO:0005634">
    <property type="term" value="C:nucleus"/>
    <property type="evidence" value="ECO:0000318"/>
    <property type="project" value="GO_Central"/>
</dbReference>
<dbReference type="GO" id="GO:0005504">
    <property type="term" value="F:fatty acid binding"/>
    <property type="evidence" value="ECO:0000318"/>
    <property type="project" value="GO_Central"/>
</dbReference>
<dbReference type="GO" id="GO:0015908">
    <property type="term" value="P:fatty acid transport"/>
    <property type="evidence" value="ECO:0000318"/>
    <property type="project" value="GO_Central"/>
</dbReference>
<dbReference type="CDD" id="cd00742">
    <property type="entry name" value="FABP"/>
    <property type="match status" value="1"/>
</dbReference>
<dbReference type="FunFam" id="2.40.128.20:FF:000001">
    <property type="entry name" value="Fatty acid-binding protein, adipocyte"/>
    <property type="match status" value="1"/>
</dbReference>
<dbReference type="Gene3D" id="2.40.128.20">
    <property type="match status" value="1"/>
</dbReference>
<dbReference type="InterPro" id="IPR012674">
    <property type="entry name" value="Calycin"/>
</dbReference>
<dbReference type="InterPro" id="IPR000463">
    <property type="entry name" value="Fatty_acid-bd"/>
</dbReference>
<dbReference type="InterPro" id="IPR031259">
    <property type="entry name" value="ILBP"/>
</dbReference>
<dbReference type="InterPro" id="IPR000566">
    <property type="entry name" value="Lipocln_cytosolic_FA-bd_dom"/>
</dbReference>
<dbReference type="PANTHER" id="PTHR11955">
    <property type="entry name" value="FATTY ACID BINDING PROTEIN"/>
    <property type="match status" value="1"/>
</dbReference>
<dbReference type="Pfam" id="PF00061">
    <property type="entry name" value="Lipocalin"/>
    <property type="match status" value="1"/>
</dbReference>
<dbReference type="PRINTS" id="PR00178">
    <property type="entry name" value="FATTYACIDBP"/>
</dbReference>
<dbReference type="SUPFAM" id="SSF50814">
    <property type="entry name" value="Lipocalins"/>
    <property type="match status" value="1"/>
</dbReference>
<dbReference type="PROSITE" id="PS00214">
    <property type="entry name" value="FABP"/>
    <property type="match status" value="1"/>
</dbReference>
<name>FABP6_CAEEL</name>
<feature type="chain" id="PRO_0000067424" description="Fatty acid-binding protein homolog 6">
    <location>
        <begin position="1"/>
        <end position="135"/>
    </location>
</feature>
<feature type="binding site" evidence="1">
    <location>
        <position position="110"/>
    </location>
    <ligand>
        <name>a fatty acid</name>
        <dbReference type="ChEBI" id="CHEBI:28868"/>
    </ligand>
</feature>
<feature type="binding site" evidence="1">
    <location>
        <begin position="130"/>
        <end position="132"/>
    </location>
    <ligand>
        <name>a fatty acid</name>
        <dbReference type="ChEBI" id="CHEBI:28868"/>
    </ligand>
</feature>
<accession>O01812</accession>
<comment type="interaction">
    <interactant intactId="EBI-327961">
        <id>O01812</id>
    </interactant>
    <interactant intactId="EBI-332157">
        <id>P34629</id>
        <label>lap-1</label>
    </interactant>
    <organismsDiffer>false</organismsDiffer>
    <experiments>2</experiments>
</comment>
<comment type="similarity">
    <text evidence="2">Belongs to the calycin superfamily. Fatty-acid binding protein (FABP) family.</text>
</comment>
<protein>
    <recommendedName>
        <fullName>Fatty acid-binding protein homolog 6</fullName>
    </recommendedName>
</protein>
<reference key="1">
    <citation type="journal article" date="1998" name="Science">
        <title>Genome sequence of the nematode C. elegans: a platform for investigating biology.</title>
        <authorList>
            <consortium name="The C. elegans sequencing consortium"/>
        </authorList>
    </citation>
    <scope>NUCLEOTIDE SEQUENCE [LARGE SCALE GENOMIC DNA]</scope>
    <source>
        <strain>Bristol N2</strain>
    </source>
</reference>
<proteinExistence type="evidence at protein level"/>
<sequence>MSQEFVGRWKLIHSENFEEYMKEVGVGLITRKAAANLKPTLEIKVEGDLWYSNQYSTFKNTTLSFKLGQEFDETTPDGRTVKSVVNFENGKFIHIQKKIKDSDKESIITRWLEGDKLITTLESGSVVSRREYVRE</sequence>
<organism>
    <name type="scientific">Caenorhabditis elegans</name>
    <dbReference type="NCBI Taxonomy" id="6239"/>
    <lineage>
        <taxon>Eukaryota</taxon>
        <taxon>Metazoa</taxon>
        <taxon>Ecdysozoa</taxon>
        <taxon>Nematoda</taxon>
        <taxon>Chromadorea</taxon>
        <taxon>Rhabditida</taxon>
        <taxon>Rhabditina</taxon>
        <taxon>Rhabditomorpha</taxon>
        <taxon>Rhabditoidea</taxon>
        <taxon>Rhabditidae</taxon>
        <taxon>Peloderinae</taxon>
        <taxon>Caenorhabditis</taxon>
    </lineage>
</organism>